<sequence>MMITLRKLPLAVAVAAGVMSAQAMAVDFHGYARSGIGWTGSGGEQQCFQATGAQSKYRLGNECETYAELKLGQEVWKEGDKSFYFDTNVAYSVNQQNDWESTDPAFREANVQGKNLIEWLPGSTIWAGKRFYQRHDVHMIDFYYWDISGPGAGIENIDLGFGKLSLAATRSTEAGGSYTFSSQNIYDEVKDTANDVFDVRLAGLQTNPDGVLELGVDYGRANTTDGYKLADGASKDGWMFTAEHTQSMLKGYNKFVVQYATDAMTTQGKGQARGSDGSSSFTEELSDGTKINYANKVINNNGNMWRILDHGAISLGDKWDLMYVGMYQNIDWDNNLGTEWWTVGVRPMYKWTPIMSTLLEVGYDNVKSQQTGDRNNQYKITLAQQWQAGDSIWSRPAIRIFATYAKWDEKWGYIKDGDNISRYAAATNSGISTNSRGDSDEWTFGAQMEIWW</sequence>
<name>LAMB_SALEP</name>
<protein>
    <recommendedName>
        <fullName evidence="1">Maltoporin</fullName>
    </recommendedName>
    <alternativeName>
        <fullName evidence="1">Maltose-inducible porin</fullName>
    </alternativeName>
</protein>
<dbReference type="EMBL" id="AM933172">
    <property type="protein sequence ID" value="CAR35564.1"/>
    <property type="molecule type" value="Genomic_DNA"/>
</dbReference>
<dbReference type="RefSeq" id="WP_000973645.1">
    <property type="nucleotide sequence ID" value="NC_011294.1"/>
</dbReference>
<dbReference type="SMR" id="B5QYJ4"/>
<dbReference type="KEGG" id="set:SEN4000"/>
<dbReference type="HOGENOM" id="CLU_032473_4_1_6"/>
<dbReference type="Proteomes" id="UP000000613">
    <property type="component" value="Chromosome"/>
</dbReference>
<dbReference type="GO" id="GO:0009279">
    <property type="term" value="C:cell outer membrane"/>
    <property type="evidence" value="ECO:0007669"/>
    <property type="project" value="UniProtKB-SubCell"/>
</dbReference>
<dbReference type="GO" id="GO:0046930">
    <property type="term" value="C:pore complex"/>
    <property type="evidence" value="ECO:0007669"/>
    <property type="project" value="UniProtKB-KW"/>
</dbReference>
<dbReference type="GO" id="GO:0042958">
    <property type="term" value="F:maltodextrin transmembrane transporter activity"/>
    <property type="evidence" value="ECO:0007669"/>
    <property type="project" value="InterPro"/>
</dbReference>
<dbReference type="GO" id="GO:0015481">
    <property type="term" value="F:maltose transporting porin activity"/>
    <property type="evidence" value="ECO:0007669"/>
    <property type="project" value="InterPro"/>
</dbReference>
<dbReference type="GO" id="GO:0006811">
    <property type="term" value="P:monoatomic ion transport"/>
    <property type="evidence" value="ECO:0007669"/>
    <property type="project" value="UniProtKB-KW"/>
</dbReference>
<dbReference type="CDD" id="cd01346">
    <property type="entry name" value="Maltoporin-like"/>
    <property type="match status" value="1"/>
</dbReference>
<dbReference type="FunFam" id="2.40.170.10:FF:000001">
    <property type="entry name" value="Maltoporin"/>
    <property type="match status" value="1"/>
</dbReference>
<dbReference type="Gene3D" id="2.40.170.10">
    <property type="entry name" value="Porin, LamB type"/>
    <property type="match status" value="1"/>
</dbReference>
<dbReference type="HAMAP" id="MF_01301">
    <property type="entry name" value="LamB"/>
    <property type="match status" value="1"/>
</dbReference>
<dbReference type="InterPro" id="IPR050286">
    <property type="entry name" value="G_neg_Bact_CarbUptk_Porin"/>
</dbReference>
<dbReference type="InterPro" id="IPR023738">
    <property type="entry name" value="Maltoporin"/>
</dbReference>
<dbReference type="InterPro" id="IPR003192">
    <property type="entry name" value="Porin_LamB"/>
</dbReference>
<dbReference type="InterPro" id="IPR036998">
    <property type="entry name" value="Porin_LamB_sf"/>
</dbReference>
<dbReference type="NCBIfam" id="NF006860">
    <property type="entry name" value="PRK09360.1"/>
    <property type="match status" value="1"/>
</dbReference>
<dbReference type="PANTHER" id="PTHR38762">
    <property type="entry name" value="CRYPTIC OUTER MEMBRANE PORIN BGLH-RELATED"/>
    <property type="match status" value="1"/>
</dbReference>
<dbReference type="PANTHER" id="PTHR38762:SF1">
    <property type="entry name" value="CRYPTIC OUTER MEMBRANE PORIN BGLH-RELATED"/>
    <property type="match status" value="1"/>
</dbReference>
<dbReference type="Pfam" id="PF02264">
    <property type="entry name" value="LamB"/>
    <property type="match status" value="1"/>
</dbReference>
<dbReference type="SUPFAM" id="SSF56935">
    <property type="entry name" value="Porins"/>
    <property type="match status" value="1"/>
</dbReference>
<organism>
    <name type="scientific">Salmonella enteritidis PT4 (strain P125109)</name>
    <dbReference type="NCBI Taxonomy" id="550537"/>
    <lineage>
        <taxon>Bacteria</taxon>
        <taxon>Pseudomonadati</taxon>
        <taxon>Pseudomonadota</taxon>
        <taxon>Gammaproteobacteria</taxon>
        <taxon>Enterobacterales</taxon>
        <taxon>Enterobacteriaceae</taxon>
        <taxon>Salmonella</taxon>
    </lineage>
</organism>
<proteinExistence type="inferred from homology"/>
<gene>
    <name evidence="1" type="primary">lamB</name>
    <name type="ordered locus">SEN4000</name>
</gene>
<accession>B5QYJ4</accession>
<feature type="signal peptide" evidence="1">
    <location>
        <begin position="1"/>
        <end position="25"/>
    </location>
</feature>
<feature type="chain" id="PRO_5000397459" description="Maltoporin">
    <location>
        <begin position="26"/>
        <end position="452"/>
    </location>
</feature>
<feature type="site" description="Greasy slide, important in sugar transport" evidence="1">
    <location>
        <position position="31"/>
    </location>
</feature>
<feature type="site" description="Greasy slide, important in sugar transport" evidence="1">
    <location>
        <position position="66"/>
    </location>
</feature>
<feature type="site" description="Greasy slide, important in sugar transport" evidence="1">
    <location>
        <position position="99"/>
    </location>
</feature>
<feature type="site" description="Important in sugar transport" evidence="1">
    <location>
        <position position="143"/>
    </location>
</feature>
<feature type="site" description="Greasy slide, important in sugar transport" evidence="1">
    <location>
        <position position="252"/>
    </location>
</feature>
<feature type="site" description="Greasy slide, important in sugar transport" evidence="1">
    <location>
        <position position="393"/>
    </location>
</feature>
<feature type="site" description="Greasy slide, important in sugar transport" evidence="1">
    <location>
        <position position="451"/>
    </location>
</feature>
<reference key="1">
    <citation type="journal article" date="2008" name="Genome Res.">
        <title>Comparative genome analysis of Salmonella enteritidis PT4 and Salmonella gallinarum 287/91 provides insights into evolutionary and host adaptation pathways.</title>
        <authorList>
            <person name="Thomson N.R."/>
            <person name="Clayton D.J."/>
            <person name="Windhorst D."/>
            <person name="Vernikos G."/>
            <person name="Davidson S."/>
            <person name="Churcher C."/>
            <person name="Quail M.A."/>
            <person name="Stevens M."/>
            <person name="Jones M.A."/>
            <person name="Watson M."/>
            <person name="Barron A."/>
            <person name="Layton A."/>
            <person name="Pickard D."/>
            <person name="Kingsley R.A."/>
            <person name="Bignell A."/>
            <person name="Clark L."/>
            <person name="Harris B."/>
            <person name="Ormond D."/>
            <person name="Abdellah Z."/>
            <person name="Brooks K."/>
            <person name="Cherevach I."/>
            <person name="Chillingworth T."/>
            <person name="Woodward J."/>
            <person name="Norberczak H."/>
            <person name="Lord A."/>
            <person name="Arrowsmith C."/>
            <person name="Jagels K."/>
            <person name="Moule S."/>
            <person name="Mungall K."/>
            <person name="Saunders M."/>
            <person name="Whitehead S."/>
            <person name="Chabalgoity J.A."/>
            <person name="Maskell D."/>
            <person name="Humphreys T."/>
            <person name="Roberts M."/>
            <person name="Barrow P.A."/>
            <person name="Dougan G."/>
            <person name="Parkhill J."/>
        </authorList>
    </citation>
    <scope>NUCLEOTIDE SEQUENCE [LARGE SCALE GENOMIC DNA]</scope>
    <source>
        <strain>P125109</strain>
    </source>
</reference>
<comment type="function">
    <text evidence="1">Involved in the transport of maltose and maltodextrins.</text>
</comment>
<comment type="catalytic activity">
    <reaction evidence="1">
        <text>beta-maltose(in) = beta-maltose(out)</text>
        <dbReference type="Rhea" id="RHEA:29731"/>
        <dbReference type="ChEBI" id="CHEBI:18147"/>
    </reaction>
</comment>
<comment type="subunit">
    <text evidence="1">Homotrimer formed of three 18-stranded antiparallel beta-barrels, containing three independent channels.</text>
</comment>
<comment type="subcellular location">
    <subcellularLocation>
        <location evidence="1">Cell outer membrane</location>
        <topology evidence="1">Multi-pass membrane protein</topology>
    </subcellularLocation>
</comment>
<comment type="induction">
    <text evidence="1">By maltose.</text>
</comment>
<comment type="similarity">
    <text evidence="1">Belongs to the porin LamB (TC 1.B.3) family.</text>
</comment>
<keyword id="KW-0998">Cell outer membrane</keyword>
<keyword id="KW-0406">Ion transport</keyword>
<keyword id="KW-0472">Membrane</keyword>
<keyword id="KW-0626">Porin</keyword>
<keyword id="KW-0732">Signal</keyword>
<keyword id="KW-0762">Sugar transport</keyword>
<keyword id="KW-0812">Transmembrane</keyword>
<keyword id="KW-1134">Transmembrane beta strand</keyword>
<keyword id="KW-0813">Transport</keyword>
<evidence type="ECO:0000255" key="1">
    <source>
        <dbReference type="HAMAP-Rule" id="MF_01301"/>
    </source>
</evidence>